<comment type="catalytic activity">
    <reaction evidence="2">
        <text>hydrolysis of (1-&gt;4)-alpha-D-glucosidic linkage in 4-alpha-D-[(1-&gt;4)-alpha-D-glucanosyl]n trehalose to yield trehalose and (1-&gt;4)-alpha-D-glucan.</text>
        <dbReference type="EC" id="3.2.1.141"/>
    </reaction>
</comment>
<comment type="pathway">
    <text>Glycan biosynthesis; trehalose biosynthesis.</text>
</comment>
<comment type="subcellular location">
    <subcellularLocation>
        <location evidence="1">Cytoplasm</location>
    </subcellularLocation>
</comment>
<comment type="similarity">
    <text evidence="3">Belongs to the glycosyl hydrolase 13 family.</text>
</comment>
<proteinExistence type="inferred from homology"/>
<gene>
    <name type="primary">treZ</name>
</gene>
<organism>
    <name type="scientific">Arthrobacter ramosus</name>
    <dbReference type="NCBI Taxonomy" id="1672"/>
    <lineage>
        <taxon>Bacteria</taxon>
        <taxon>Bacillati</taxon>
        <taxon>Actinomycetota</taxon>
        <taxon>Actinomycetes</taxon>
        <taxon>Micrococcales</taxon>
        <taxon>Micrococcaceae</taxon>
        <taxon>Arthrobacter</taxon>
    </lineage>
</organism>
<dbReference type="EC" id="3.2.1.141" evidence="2"/>
<dbReference type="EMBL" id="AB045141">
    <property type="protein sequence ID" value="BAB40766.1"/>
    <property type="molecule type" value="Genomic_DNA"/>
</dbReference>
<dbReference type="PIR" id="JC7727">
    <property type="entry name" value="JC7727"/>
</dbReference>
<dbReference type="SMR" id="Q9AJN6"/>
<dbReference type="CAZy" id="CBM48">
    <property type="family name" value="Carbohydrate-Binding Module Family 48"/>
</dbReference>
<dbReference type="CAZy" id="GH13">
    <property type="family name" value="Glycoside Hydrolase Family 13"/>
</dbReference>
<dbReference type="UniPathway" id="UPA00299"/>
<dbReference type="GO" id="GO:0005737">
    <property type="term" value="C:cytoplasm"/>
    <property type="evidence" value="ECO:0007669"/>
    <property type="project" value="UniProtKB-SubCell"/>
</dbReference>
<dbReference type="GO" id="GO:0033942">
    <property type="term" value="F:4-alpha-D-(1-&gt;4)-alpha-D-glucanotrehalose trehalohydrolase activity"/>
    <property type="evidence" value="ECO:0007669"/>
    <property type="project" value="UniProtKB-EC"/>
</dbReference>
<dbReference type="GO" id="GO:0005992">
    <property type="term" value="P:trehalose biosynthetic process"/>
    <property type="evidence" value="ECO:0007669"/>
    <property type="project" value="UniProtKB-UniPathway"/>
</dbReference>
<dbReference type="CDD" id="cd11325">
    <property type="entry name" value="AmyAc_GTHase"/>
    <property type="match status" value="1"/>
</dbReference>
<dbReference type="CDD" id="cd02853">
    <property type="entry name" value="E_set_MTHase_like_N"/>
    <property type="match status" value="1"/>
</dbReference>
<dbReference type="Gene3D" id="1.10.10.760">
    <property type="entry name" value="E-set domains of sugar-utilizing enzymes"/>
    <property type="match status" value="1"/>
</dbReference>
<dbReference type="Gene3D" id="3.20.20.80">
    <property type="entry name" value="Glycosidases"/>
    <property type="match status" value="1"/>
</dbReference>
<dbReference type="Gene3D" id="2.60.40.10">
    <property type="entry name" value="Immunoglobulins"/>
    <property type="match status" value="1"/>
</dbReference>
<dbReference type="InterPro" id="IPR006047">
    <property type="entry name" value="Glyco_hydro_13_cat_dom"/>
</dbReference>
<dbReference type="InterPro" id="IPR017853">
    <property type="entry name" value="Glycoside_hydrolase_SF"/>
</dbReference>
<dbReference type="InterPro" id="IPR013783">
    <property type="entry name" value="Ig-like_fold"/>
</dbReference>
<dbReference type="InterPro" id="IPR014756">
    <property type="entry name" value="Ig_E-set"/>
</dbReference>
<dbReference type="InterPro" id="IPR012768">
    <property type="entry name" value="Trehalose_TreZ"/>
</dbReference>
<dbReference type="InterPro" id="IPR044901">
    <property type="entry name" value="Trehalose_TreZ_E-set_sf"/>
</dbReference>
<dbReference type="NCBIfam" id="TIGR02402">
    <property type="entry name" value="trehalose_TreZ"/>
    <property type="match status" value="1"/>
</dbReference>
<dbReference type="PANTHER" id="PTHR43651">
    <property type="entry name" value="1,4-ALPHA-GLUCAN-BRANCHING ENZYME"/>
    <property type="match status" value="1"/>
</dbReference>
<dbReference type="PANTHER" id="PTHR43651:SF11">
    <property type="entry name" value="MALTO-OLIGOSYLTREHALOSE TREHALOHYDROLASE"/>
    <property type="match status" value="1"/>
</dbReference>
<dbReference type="Pfam" id="PF00128">
    <property type="entry name" value="Alpha-amylase"/>
    <property type="match status" value="1"/>
</dbReference>
<dbReference type="PIRSF" id="PIRSF006337">
    <property type="entry name" value="Trehalose_TreZ"/>
    <property type="match status" value="1"/>
</dbReference>
<dbReference type="SMART" id="SM00642">
    <property type="entry name" value="Aamy"/>
    <property type="match status" value="1"/>
</dbReference>
<dbReference type="SUPFAM" id="SSF51445">
    <property type="entry name" value="(Trans)glycosidases"/>
    <property type="match status" value="1"/>
</dbReference>
<dbReference type="SUPFAM" id="SSF81296">
    <property type="entry name" value="E set domains"/>
    <property type="match status" value="1"/>
</dbReference>
<feature type="chain" id="PRO_0000054322" description="Malto-oligosyltrehalose trehalohydrolase">
    <location>
        <begin position="1"/>
        <end position="575"/>
    </location>
</feature>
<feature type="active site" description="Nucleophile" evidence="2">
    <location>
        <position position="250"/>
    </location>
</feature>
<feature type="active site" description="Proton donor" evidence="2">
    <location>
        <position position="287"/>
    </location>
</feature>
<feature type="binding site" evidence="2">
    <location>
        <begin position="248"/>
        <end position="253"/>
    </location>
    <ligand>
        <name>substrate</name>
    </ligand>
</feature>
<feature type="binding site" evidence="2">
    <location>
        <begin position="312"/>
        <end position="316"/>
    </location>
    <ligand>
        <name>substrate</name>
    </ligand>
</feature>
<feature type="binding site" evidence="2">
    <location>
        <begin position="381"/>
        <end position="386"/>
    </location>
    <ligand>
        <name>substrate</name>
    </ligand>
</feature>
<feature type="site" description="Transition state stabilizer" evidence="2">
    <location>
        <position position="382"/>
    </location>
</feature>
<protein>
    <recommendedName>
        <fullName>Malto-oligosyltrehalose trehalohydrolase</fullName>
        <shortName>MTHase</shortName>
        <ecNumber evidence="2">3.2.1.141</ecNumber>
    </recommendedName>
    <alternativeName>
        <fullName>4-alpha-D-((1-&gt;4)-alpha-D-glucano)trehalose trehalohydrolase</fullName>
    </alternativeName>
    <alternativeName>
        <fullName>Maltooligosyl trehalose trehalohydrolase</fullName>
    </alternativeName>
</protein>
<sequence length="575" mass="63080">MNRRFPVWAPQAAQVTLVVGQGRAELPLTRDENGWWALQQPWDGGPDLVDYGYLVDGKGPFADPRSLRQPRGVHELGREFDPARYAWGDDGWRGRDLTGAVIYELHVGTFTPEGTLDSAIRRLDHLVRLGVDAVELLPVNAFNGTHGWGYDGVLWYAVHEPYGGPEAYQRFVDACHARGLAVVQDVVYNHLGPSGNHLPDFGPYLGSGAANTWGDALNLDGPLSDEVRRYIIDNAVYWLRDMHADGLRLDAVHALRDARALHLLEELAARVDELAGELGRPLTLIAESDLNDPKLIRSRAAHGYGLDAQWDDDVHHAVHANVTGETVGYYADFGGLGALVKVFQRGWFHDGTWSSFRERHHGRPLDPDIPFRRLVAFAQDHDQVGNRAVGDRMSAQVGEGSLAAAAALVLLGPFTPMLFMGEEWGARTPWQFFTSHPEPELGEATARGRIAEFARMGWDPAVVPDPQDPATFARSHLDWSEPEREPHAGLLAFYTDLIALRRELPVDAPAREVDADEARGVFAFSRGPLRVTVALRPGPVGVPEHGGLVLAYGEVRAGAAGLHLDGPGAAIVRLE</sequence>
<accession>Q9AJN6</accession>
<evidence type="ECO:0000250" key="1"/>
<evidence type="ECO:0000250" key="2">
    <source>
        <dbReference type="UniProtKB" id="Q55088"/>
    </source>
</evidence>
<evidence type="ECO:0000305" key="3"/>
<name>TREZ_ARTRM</name>
<reference key="1">
    <citation type="journal article" date="2001" name="Biosci. Biotechnol. Biochem.">
        <title>Trehalose-producing operon treYZ from Arthrobacter ramosus S34.</title>
        <authorList>
            <person name="Yamamoto T."/>
            <person name="Maruta K."/>
            <person name="Watanabe H."/>
            <person name="Yamashita H."/>
            <person name="Kubota M."/>
            <person name="Fukuda S."/>
            <person name="Kurimoto M."/>
        </authorList>
    </citation>
    <scope>NUCLEOTIDE SEQUENCE [GENOMIC DNA]</scope>
    <source>
        <strain>S34</strain>
    </source>
</reference>
<keyword id="KW-0119">Carbohydrate metabolism</keyword>
<keyword id="KW-0963">Cytoplasm</keyword>
<keyword id="KW-0326">Glycosidase</keyword>
<keyword id="KW-0378">Hydrolase</keyword>